<feature type="chain" id="PRO_0000350452" description="Probable dual-specificity RNA methyltransferase RlmN">
    <location>
        <begin position="1"/>
        <end position="361"/>
    </location>
</feature>
<feature type="domain" description="Radical SAM core" evidence="2">
    <location>
        <begin position="97"/>
        <end position="335"/>
    </location>
</feature>
<feature type="active site" description="Proton acceptor" evidence="1">
    <location>
        <position position="91"/>
    </location>
</feature>
<feature type="active site" description="S-methylcysteine intermediate" evidence="1">
    <location>
        <position position="340"/>
    </location>
</feature>
<feature type="binding site" evidence="1">
    <location>
        <position position="111"/>
    </location>
    <ligand>
        <name>[4Fe-4S] cluster</name>
        <dbReference type="ChEBI" id="CHEBI:49883"/>
        <note>4Fe-4S-S-AdoMet</note>
    </ligand>
</feature>
<feature type="binding site" evidence="1">
    <location>
        <position position="115"/>
    </location>
    <ligand>
        <name>[4Fe-4S] cluster</name>
        <dbReference type="ChEBI" id="CHEBI:49883"/>
        <note>4Fe-4S-S-AdoMet</note>
    </ligand>
</feature>
<feature type="binding site" evidence="1">
    <location>
        <position position="118"/>
    </location>
    <ligand>
        <name>[4Fe-4S] cluster</name>
        <dbReference type="ChEBI" id="CHEBI:49883"/>
        <note>4Fe-4S-S-AdoMet</note>
    </ligand>
</feature>
<feature type="binding site" evidence="1">
    <location>
        <begin position="163"/>
        <end position="164"/>
    </location>
    <ligand>
        <name>S-adenosyl-L-methionine</name>
        <dbReference type="ChEBI" id="CHEBI:59789"/>
    </ligand>
</feature>
<feature type="binding site" evidence="1">
    <location>
        <position position="195"/>
    </location>
    <ligand>
        <name>S-adenosyl-L-methionine</name>
        <dbReference type="ChEBI" id="CHEBI:59789"/>
    </ligand>
</feature>
<feature type="binding site" evidence="1">
    <location>
        <begin position="218"/>
        <end position="220"/>
    </location>
    <ligand>
        <name>S-adenosyl-L-methionine</name>
        <dbReference type="ChEBI" id="CHEBI:59789"/>
    </ligand>
</feature>
<feature type="binding site" evidence="1">
    <location>
        <position position="296"/>
    </location>
    <ligand>
        <name>S-adenosyl-L-methionine</name>
        <dbReference type="ChEBI" id="CHEBI:59789"/>
    </ligand>
</feature>
<feature type="disulfide bond" description="(transient)" evidence="1">
    <location>
        <begin position="104"/>
        <end position="340"/>
    </location>
</feature>
<keyword id="KW-0004">4Fe-4S</keyword>
<keyword id="KW-0963">Cytoplasm</keyword>
<keyword id="KW-1015">Disulfide bond</keyword>
<keyword id="KW-0408">Iron</keyword>
<keyword id="KW-0411">Iron-sulfur</keyword>
<keyword id="KW-0479">Metal-binding</keyword>
<keyword id="KW-0489">Methyltransferase</keyword>
<keyword id="KW-1185">Reference proteome</keyword>
<keyword id="KW-0698">rRNA processing</keyword>
<keyword id="KW-0949">S-adenosyl-L-methionine</keyword>
<keyword id="KW-0808">Transferase</keyword>
<keyword id="KW-0819">tRNA processing</keyword>
<organism>
    <name type="scientific">Streptococcus mutans serotype c (strain ATCC 700610 / UA159)</name>
    <dbReference type="NCBI Taxonomy" id="210007"/>
    <lineage>
        <taxon>Bacteria</taxon>
        <taxon>Bacillati</taxon>
        <taxon>Bacillota</taxon>
        <taxon>Bacilli</taxon>
        <taxon>Lactobacillales</taxon>
        <taxon>Streptococcaceae</taxon>
        <taxon>Streptococcus</taxon>
    </lineage>
</organism>
<evidence type="ECO:0000255" key="1">
    <source>
        <dbReference type="HAMAP-Rule" id="MF_01849"/>
    </source>
</evidence>
<evidence type="ECO:0000255" key="2">
    <source>
        <dbReference type="PROSITE-ProRule" id="PRU01266"/>
    </source>
</evidence>
<accession>Q8DVG8</accession>
<sequence length="361" mass="41152">MKPSIYSLTRNDLIAWTIEHGEKKFRATQIWDWLYRKRVQSFEEMTNLSKDFIALLNENFLVNPLKQRIVQESADGTVKYLFELPDGMLIETVLMRQHYGLSVCVTTQVGCNIGCTFCASGLIKKQRDLNNGEITAQIMLVQKYFDERGQGERISHVVVMGIGEPFDNYDNVLKFLRTINDDNGLAIGARHITVSTSGLAHKIRDFANEGVQVNLAVSLHAPNNELRSSIMRINRSFPLEKLFAAIEYYIETTNRRVTFEYIMLNGVNDSPENAQELADLTKKIRKLSYVNLIPYNPVTEHDQYSRSPKERVDAFYDVLKKNGVNCVVRQEHGTDIDAACGQLRSNTMKRDREKATAGTAQ</sequence>
<proteinExistence type="inferred from homology"/>
<gene>
    <name evidence="1" type="primary">rlmN</name>
    <name type="ordered locus">SMU_522</name>
</gene>
<name>RLMN_STRMU</name>
<reference key="1">
    <citation type="journal article" date="2002" name="Proc. Natl. Acad. Sci. U.S.A.">
        <title>Genome sequence of Streptococcus mutans UA159, a cariogenic dental pathogen.</title>
        <authorList>
            <person name="Ajdic D.J."/>
            <person name="McShan W.M."/>
            <person name="McLaughlin R.E."/>
            <person name="Savic G."/>
            <person name="Chang J."/>
            <person name="Carson M.B."/>
            <person name="Primeaux C."/>
            <person name="Tian R."/>
            <person name="Kenton S."/>
            <person name="Jia H.G."/>
            <person name="Lin S.P."/>
            <person name="Qian Y."/>
            <person name="Li S."/>
            <person name="Zhu H."/>
            <person name="Najar F.Z."/>
            <person name="Lai H."/>
            <person name="White J."/>
            <person name="Roe B.A."/>
            <person name="Ferretti J.J."/>
        </authorList>
    </citation>
    <scope>NUCLEOTIDE SEQUENCE [LARGE SCALE GENOMIC DNA]</scope>
    <source>
        <strain>ATCC 700610 / UA159</strain>
    </source>
</reference>
<dbReference type="EC" id="2.1.1.192" evidence="1"/>
<dbReference type="EMBL" id="AE014133">
    <property type="protein sequence ID" value="AAN58265.1"/>
    <property type="molecule type" value="Genomic_DNA"/>
</dbReference>
<dbReference type="RefSeq" id="NP_720959.1">
    <property type="nucleotide sequence ID" value="NC_004350.2"/>
</dbReference>
<dbReference type="RefSeq" id="WP_002262042.1">
    <property type="nucleotide sequence ID" value="NC_004350.2"/>
</dbReference>
<dbReference type="SMR" id="Q8DVG8"/>
<dbReference type="STRING" id="210007.SMU_522"/>
<dbReference type="KEGG" id="smu:SMU_522"/>
<dbReference type="PATRIC" id="fig|210007.7.peg.460"/>
<dbReference type="eggNOG" id="COG0820">
    <property type="taxonomic scope" value="Bacteria"/>
</dbReference>
<dbReference type="HOGENOM" id="CLU_029101_0_1_9"/>
<dbReference type="OrthoDB" id="9793973at2"/>
<dbReference type="PhylomeDB" id="Q8DVG8"/>
<dbReference type="Proteomes" id="UP000002512">
    <property type="component" value="Chromosome"/>
</dbReference>
<dbReference type="GO" id="GO:0005737">
    <property type="term" value="C:cytoplasm"/>
    <property type="evidence" value="ECO:0007669"/>
    <property type="project" value="UniProtKB-SubCell"/>
</dbReference>
<dbReference type="GO" id="GO:0051539">
    <property type="term" value="F:4 iron, 4 sulfur cluster binding"/>
    <property type="evidence" value="ECO:0007669"/>
    <property type="project" value="UniProtKB-UniRule"/>
</dbReference>
<dbReference type="GO" id="GO:0046872">
    <property type="term" value="F:metal ion binding"/>
    <property type="evidence" value="ECO:0007669"/>
    <property type="project" value="UniProtKB-KW"/>
</dbReference>
<dbReference type="GO" id="GO:0070040">
    <property type="term" value="F:rRNA (adenine(2503)-C2-)-methyltransferase activity"/>
    <property type="evidence" value="ECO:0007669"/>
    <property type="project" value="UniProtKB-UniRule"/>
</dbReference>
<dbReference type="GO" id="GO:0019843">
    <property type="term" value="F:rRNA binding"/>
    <property type="evidence" value="ECO:0007669"/>
    <property type="project" value="UniProtKB-UniRule"/>
</dbReference>
<dbReference type="GO" id="GO:0002935">
    <property type="term" value="F:tRNA (adenine(37)-C2)-methyltransferase activity"/>
    <property type="evidence" value="ECO:0007669"/>
    <property type="project" value="UniProtKB-UniRule"/>
</dbReference>
<dbReference type="GO" id="GO:0000049">
    <property type="term" value="F:tRNA binding"/>
    <property type="evidence" value="ECO:0007669"/>
    <property type="project" value="UniProtKB-UniRule"/>
</dbReference>
<dbReference type="GO" id="GO:0070475">
    <property type="term" value="P:rRNA base methylation"/>
    <property type="evidence" value="ECO:0007669"/>
    <property type="project" value="UniProtKB-UniRule"/>
</dbReference>
<dbReference type="GO" id="GO:0030488">
    <property type="term" value="P:tRNA methylation"/>
    <property type="evidence" value="ECO:0007669"/>
    <property type="project" value="UniProtKB-UniRule"/>
</dbReference>
<dbReference type="CDD" id="cd01335">
    <property type="entry name" value="Radical_SAM"/>
    <property type="match status" value="1"/>
</dbReference>
<dbReference type="FunFam" id="3.20.20.70:FF:000014">
    <property type="entry name" value="Probable dual-specificity RNA methyltransferase RlmN"/>
    <property type="match status" value="1"/>
</dbReference>
<dbReference type="Gene3D" id="1.10.150.530">
    <property type="match status" value="1"/>
</dbReference>
<dbReference type="Gene3D" id="3.20.20.70">
    <property type="entry name" value="Aldolase class I"/>
    <property type="match status" value="1"/>
</dbReference>
<dbReference type="HAMAP" id="MF_01849">
    <property type="entry name" value="RNA_methyltr_RlmN"/>
    <property type="match status" value="1"/>
</dbReference>
<dbReference type="InterPro" id="IPR013785">
    <property type="entry name" value="Aldolase_TIM"/>
</dbReference>
<dbReference type="InterPro" id="IPR040072">
    <property type="entry name" value="Methyltransferase_A"/>
</dbReference>
<dbReference type="InterPro" id="IPR048641">
    <property type="entry name" value="RlmN_N"/>
</dbReference>
<dbReference type="InterPro" id="IPR027492">
    <property type="entry name" value="RNA_MTrfase_RlmN"/>
</dbReference>
<dbReference type="InterPro" id="IPR004383">
    <property type="entry name" value="rRNA_lsu_MTrfase_RlmN/Cfr"/>
</dbReference>
<dbReference type="InterPro" id="IPR007197">
    <property type="entry name" value="rSAM"/>
</dbReference>
<dbReference type="NCBIfam" id="TIGR00048">
    <property type="entry name" value="rRNA_mod_RlmN"/>
    <property type="match status" value="1"/>
</dbReference>
<dbReference type="PANTHER" id="PTHR30544">
    <property type="entry name" value="23S RRNA METHYLTRANSFERASE"/>
    <property type="match status" value="1"/>
</dbReference>
<dbReference type="PANTHER" id="PTHR30544:SF5">
    <property type="entry name" value="RADICAL SAM CORE DOMAIN-CONTAINING PROTEIN"/>
    <property type="match status" value="1"/>
</dbReference>
<dbReference type="Pfam" id="PF04055">
    <property type="entry name" value="Radical_SAM"/>
    <property type="match status" value="1"/>
</dbReference>
<dbReference type="Pfam" id="PF21016">
    <property type="entry name" value="RlmN_N"/>
    <property type="match status" value="1"/>
</dbReference>
<dbReference type="PIRSF" id="PIRSF006004">
    <property type="entry name" value="CHP00048"/>
    <property type="match status" value="1"/>
</dbReference>
<dbReference type="SFLD" id="SFLDF00275">
    <property type="entry name" value="adenosine_C2_methyltransferase"/>
    <property type="match status" value="1"/>
</dbReference>
<dbReference type="SFLD" id="SFLDG01062">
    <property type="entry name" value="methyltransferase_(Class_A)"/>
    <property type="match status" value="1"/>
</dbReference>
<dbReference type="SUPFAM" id="SSF102114">
    <property type="entry name" value="Radical SAM enzymes"/>
    <property type="match status" value="1"/>
</dbReference>
<dbReference type="PROSITE" id="PS51918">
    <property type="entry name" value="RADICAL_SAM"/>
    <property type="match status" value="1"/>
</dbReference>
<protein>
    <recommendedName>
        <fullName evidence="1">Probable dual-specificity RNA methyltransferase RlmN</fullName>
        <ecNumber evidence="1">2.1.1.192</ecNumber>
    </recommendedName>
    <alternativeName>
        <fullName evidence="1">23S rRNA (adenine(2503)-C(2))-methyltransferase</fullName>
    </alternativeName>
    <alternativeName>
        <fullName evidence="1">23S rRNA m2A2503 methyltransferase</fullName>
    </alternativeName>
    <alternativeName>
        <fullName evidence="1">Ribosomal RNA large subunit methyltransferase N</fullName>
    </alternativeName>
    <alternativeName>
        <fullName evidence="1">tRNA (adenine(37)-C(2))-methyltransferase</fullName>
    </alternativeName>
    <alternativeName>
        <fullName evidence="1">tRNA m2A37 methyltransferase</fullName>
    </alternativeName>
</protein>
<comment type="function">
    <text evidence="1">Specifically methylates position 2 of adenine 2503 in 23S rRNA and position 2 of adenine 37 in tRNAs.</text>
</comment>
<comment type="catalytic activity">
    <reaction evidence="1">
        <text>adenosine(2503) in 23S rRNA + 2 reduced [2Fe-2S]-[ferredoxin] + 2 S-adenosyl-L-methionine = 2-methyladenosine(2503) in 23S rRNA + 5'-deoxyadenosine + L-methionine + 2 oxidized [2Fe-2S]-[ferredoxin] + S-adenosyl-L-homocysteine</text>
        <dbReference type="Rhea" id="RHEA:42916"/>
        <dbReference type="Rhea" id="RHEA-COMP:10000"/>
        <dbReference type="Rhea" id="RHEA-COMP:10001"/>
        <dbReference type="Rhea" id="RHEA-COMP:10152"/>
        <dbReference type="Rhea" id="RHEA-COMP:10282"/>
        <dbReference type="ChEBI" id="CHEBI:17319"/>
        <dbReference type="ChEBI" id="CHEBI:33737"/>
        <dbReference type="ChEBI" id="CHEBI:33738"/>
        <dbReference type="ChEBI" id="CHEBI:57844"/>
        <dbReference type="ChEBI" id="CHEBI:57856"/>
        <dbReference type="ChEBI" id="CHEBI:59789"/>
        <dbReference type="ChEBI" id="CHEBI:74411"/>
        <dbReference type="ChEBI" id="CHEBI:74497"/>
        <dbReference type="EC" id="2.1.1.192"/>
    </reaction>
</comment>
<comment type="catalytic activity">
    <reaction evidence="1">
        <text>adenosine(37) in tRNA + 2 reduced [2Fe-2S]-[ferredoxin] + 2 S-adenosyl-L-methionine = 2-methyladenosine(37) in tRNA + 5'-deoxyadenosine + L-methionine + 2 oxidized [2Fe-2S]-[ferredoxin] + S-adenosyl-L-homocysteine</text>
        <dbReference type="Rhea" id="RHEA:43332"/>
        <dbReference type="Rhea" id="RHEA-COMP:10000"/>
        <dbReference type="Rhea" id="RHEA-COMP:10001"/>
        <dbReference type="Rhea" id="RHEA-COMP:10162"/>
        <dbReference type="Rhea" id="RHEA-COMP:10485"/>
        <dbReference type="ChEBI" id="CHEBI:17319"/>
        <dbReference type="ChEBI" id="CHEBI:33737"/>
        <dbReference type="ChEBI" id="CHEBI:33738"/>
        <dbReference type="ChEBI" id="CHEBI:57844"/>
        <dbReference type="ChEBI" id="CHEBI:57856"/>
        <dbReference type="ChEBI" id="CHEBI:59789"/>
        <dbReference type="ChEBI" id="CHEBI:74411"/>
        <dbReference type="ChEBI" id="CHEBI:74497"/>
        <dbReference type="EC" id="2.1.1.192"/>
    </reaction>
</comment>
<comment type="cofactor">
    <cofactor evidence="1">
        <name>[4Fe-4S] cluster</name>
        <dbReference type="ChEBI" id="CHEBI:49883"/>
    </cofactor>
    <text evidence="1">Binds 1 [4Fe-4S] cluster. The cluster is coordinated with 3 cysteines and an exchangeable S-adenosyl-L-methionine.</text>
</comment>
<comment type="subcellular location">
    <subcellularLocation>
        <location evidence="1">Cytoplasm</location>
    </subcellularLocation>
</comment>
<comment type="miscellaneous">
    <text evidence="1">Reaction proceeds by a ping-pong mechanism involving intermediate methylation of a conserved cysteine residue.</text>
</comment>
<comment type="similarity">
    <text evidence="1">Belongs to the radical SAM superfamily. RlmN family.</text>
</comment>